<name>TRPD_PYRCJ</name>
<dbReference type="EC" id="2.4.2.18" evidence="1"/>
<dbReference type="EMBL" id="CP000561">
    <property type="protein sequence ID" value="ABO08633.1"/>
    <property type="status" value="ALT_INIT"/>
    <property type="molecule type" value="Genomic_DNA"/>
</dbReference>
<dbReference type="RefSeq" id="WP_193322562.1">
    <property type="nucleotide sequence ID" value="NC_009073.1"/>
</dbReference>
<dbReference type="SMR" id="A3MVG6"/>
<dbReference type="STRING" id="410359.Pcal_1208"/>
<dbReference type="GeneID" id="4908272"/>
<dbReference type="KEGG" id="pcl:Pcal_1208"/>
<dbReference type="eggNOG" id="arCOG02012">
    <property type="taxonomic scope" value="Archaea"/>
</dbReference>
<dbReference type="HOGENOM" id="CLU_034315_2_1_2"/>
<dbReference type="OrthoDB" id="8214at2157"/>
<dbReference type="UniPathway" id="UPA00035">
    <property type="reaction ID" value="UER00041"/>
</dbReference>
<dbReference type="Proteomes" id="UP000001431">
    <property type="component" value="Chromosome"/>
</dbReference>
<dbReference type="GO" id="GO:0005829">
    <property type="term" value="C:cytosol"/>
    <property type="evidence" value="ECO:0007669"/>
    <property type="project" value="TreeGrafter"/>
</dbReference>
<dbReference type="GO" id="GO:0004048">
    <property type="term" value="F:anthranilate phosphoribosyltransferase activity"/>
    <property type="evidence" value="ECO:0007669"/>
    <property type="project" value="UniProtKB-UniRule"/>
</dbReference>
<dbReference type="GO" id="GO:0000287">
    <property type="term" value="F:magnesium ion binding"/>
    <property type="evidence" value="ECO:0007669"/>
    <property type="project" value="UniProtKB-UniRule"/>
</dbReference>
<dbReference type="GO" id="GO:0000162">
    <property type="term" value="P:L-tryptophan biosynthetic process"/>
    <property type="evidence" value="ECO:0007669"/>
    <property type="project" value="UniProtKB-UniRule"/>
</dbReference>
<dbReference type="Gene3D" id="3.40.1030.10">
    <property type="entry name" value="Nucleoside phosphorylase/phosphoribosyltransferase catalytic domain"/>
    <property type="match status" value="1"/>
</dbReference>
<dbReference type="Gene3D" id="1.20.970.10">
    <property type="entry name" value="Transferase, Pyrimidine Nucleoside Phosphorylase, Chain C"/>
    <property type="match status" value="1"/>
</dbReference>
<dbReference type="HAMAP" id="MF_00211">
    <property type="entry name" value="TrpD"/>
    <property type="match status" value="1"/>
</dbReference>
<dbReference type="InterPro" id="IPR005940">
    <property type="entry name" value="Anthranilate_Pribosyl_Tfrase"/>
</dbReference>
<dbReference type="InterPro" id="IPR000312">
    <property type="entry name" value="Glycosyl_Trfase_fam3"/>
</dbReference>
<dbReference type="InterPro" id="IPR017459">
    <property type="entry name" value="Glycosyl_Trfase_fam3_N_dom"/>
</dbReference>
<dbReference type="InterPro" id="IPR036320">
    <property type="entry name" value="Glycosyl_Trfase_fam3_N_dom_sf"/>
</dbReference>
<dbReference type="InterPro" id="IPR035902">
    <property type="entry name" value="Nuc_phospho_transferase"/>
</dbReference>
<dbReference type="NCBIfam" id="TIGR01245">
    <property type="entry name" value="trpD"/>
    <property type="match status" value="1"/>
</dbReference>
<dbReference type="PANTHER" id="PTHR43285">
    <property type="entry name" value="ANTHRANILATE PHOSPHORIBOSYLTRANSFERASE"/>
    <property type="match status" value="1"/>
</dbReference>
<dbReference type="PANTHER" id="PTHR43285:SF2">
    <property type="entry name" value="ANTHRANILATE PHOSPHORIBOSYLTRANSFERASE"/>
    <property type="match status" value="1"/>
</dbReference>
<dbReference type="Pfam" id="PF02885">
    <property type="entry name" value="Glycos_trans_3N"/>
    <property type="match status" value="1"/>
</dbReference>
<dbReference type="Pfam" id="PF00591">
    <property type="entry name" value="Glycos_transf_3"/>
    <property type="match status" value="1"/>
</dbReference>
<dbReference type="SUPFAM" id="SSF52418">
    <property type="entry name" value="Nucleoside phosphorylase/phosphoribosyltransferase catalytic domain"/>
    <property type="match status" value="1"/>
</dbReference>
<dbReference type="SUPFAM" id="SSF47648">
    <property type="entry name" value="Nucleoside phosphorylase/phosphoribosyltransferase N-terminal domain"/>
    <property type="match status" value="1"/>
</dbReference>
<accession>A3MVG6</accession>
<evidence type="ECO:0000255" key="1">
    <source>
        <dbReference type="HAMAP-Rule" id="MF_00211"/>
    </source>
</evidence>
<evidence type="ECO:0000305" key="2"/>
<sequence length="332" mass="34639">MDVQPLLKKLGEGKTLTVDEAYRLARGILLGELGEVEVAAALTAMSVRGETGEEVLGFVKMAREAAVRVPLEVDAIDTAGTGGDGAGTINLSTAAAIVAAAAGAKVLKHGNRSASGLFGSADFMEAVGYNLDLPPEKAARLVATVGFAFVFAPKYHPAFAKVAPVRRRLPFRTIFNVVGPLANPGCVKRQLVGVAEPRLLEVVGEALAGMGHVKALVVHGGGVDEVSTEGPTTVVEVRGFKLERYVVSPGDFGAPVTPLPRARSREEAVARALAGLRGEDREAAVAIAANAGFALYVADVVKDFRDGFELALKTIEEGAAYRKLVEAVEASR</sequence>
<comment type="function">
    <text evidence="1">Catalyzes the transfer of the phosphoribosyl group of 5-phosphorylribose-1-pyrophosphate (PRPP) to anthranilate to yield N-(5'-phosphoribosyl)-anthranilate (PRA).</text>
</comment>
<comment type="catalytic activity">
    <reaction evidence="1">
        <text>N-(5-phospho-beta-D-ribosyl)anthranilate + diphosphate = 5-phospho-alpha-D-ribose 1-diphosphate + anthranilate</text>
        <dbReference type="Rhea" id="RHEA:11768"/>
        <dbReference type="ChEBI" id="CHEBI:16567"/>
        <dbReference type="ChEBI" id="CHEBI:18277"/>
        <dbReference type="ChEBI" id="CHEBI:33019"/>
        <dbReference type="ChEBI" id="CHEBI:58017"/>
        <dbReference type="EC" id="2.4.2.18"/>
    </reaction>
</comment>
<comment type="cofactor">
    <cofactor evidence="1">
        <name>Mg(2+)</name>
        <dbReference type="ChEBI" id="CHEBI:18420"/>
    </cofactor>
    <text evidence="1">Binds 2 magnesium ions per monomer.</text>
</comment>
<comment type="pathway">
    <text evidence="1">Amino-acid biosynthesis; L-tryptophan biosynthesis; L-tryptophan from chorismate: step 2/5.</text>
</comment>
<comment type="subunit">
    <text evidence="1">Homodimer.</text>
</comment>
<comment type="similarity">
    <text evidence="1">Belongs to the anthranilate phosphoribosyltransferase family.</text>
</comment>
<comment type="sequence caution" evidence="2">
    <conflict type="erroneous initiation">
        <sequence resource="EMBL-CDS" id="ABO08633"/>
    </conflict>
    <text>Truncated N-terminus.</text>
</comment>
<organism>
    <name type="scientific">Pyrobaculum calidifontis (strain DSM 21063 / JCM 11548 / VA1)</name>
    <dbReference type="NCBI Taxonomy" id="410359"/>
    <lineage>
        <taxon>Archaea</taxon>
        <taxon>Thermoproteota</taxon>
        <taxon>Thermoprotei</taxon>
        <taxon>Thermoproteales</taxon>
        <taxon>Thermoproteaceae</taxon>
        <taxon>Pyrobaculum</taxon>
    </lineage>
</organism>
<protein>
    <recommendedName>
        <fullName evidence="1">Anthranilate phosphoribosyltransferase</fullName>
        <ecNumber evidence="1">2.4.2.18</ecNumber>
    </recommendedName>
</protein>
<keyword id="KW-0028">Amino-acid biosynthesis</keyword>
<keyword id="KW-0057">Aromatic amino acid biosynthesis</keyword>
<keyword id="KW-0328">Glycosyltransferase</keyword>
<keyword id="KW-0460">Magnesium</keyword>
<keyword id="KW-0479">Metal-binding</keyword>
<keyword id="KW-0808">Transferase</keyword>
<keyword id="KW-0822">Tryptophan biosynthesis</keyword>
<proteinExistence type="inferred from homology"/>
<reference key="1">
    <citation type="submission" date="2007-02" db="EMBL/GenBank/DDBJ databases">
        <title>Complete sequence of Pyrobaculum calidifontis JCM 11548.</title>
        <authorList>
            <consortium name="US DOE Joint Genome Institute"/>
            <person name="Copeland A."/>
            <person name="Lucas S."/>
            <person name="Lapidus A."/>
            <person name="Barry K."/>
            <person name="Glavina del Rio T."/>
            <person name="Dalin E."/>
            <person name="Tice H."/>
            <person name="Pitluck S."/>
            <person name="Chain P."/>
            <person name="Malfatti S."/>
            <person name="Shin M."/>
            <person name="Vergez L."/>
            <person name="Schmutz J."/>
            <person name="Larimer F."/>
            <person name="Land M."/>
            <person name="Hauser L."/>
            <person name="Kyrpides N."/>
            <person name="Mikhailova N."/>
            <person name="Cozen A.E."/>
            <person name="Fitz-Gibbon S.T."/>
            <person name="House C.H."/>
            <person name="Saltikov C."/>
            <person name="Lowe T.M."/>
            <person name="Richardson P."/>
        </authorList>
    </citation>
    <scope>NUCLEOTIDE SEQUENCE [LARGE SCALE GENOMIC DNA]</scope>
    <source>
        <strain>DSM 21063 / JCM 11548 / VA1</strain>
    </source>
</reference>
<feature type="chain" id="PRO_0000325482" description="Anthranilate phosphoribosyltransferase">
    <location>
        <begin position="1"/>
        <end position="332"/>
    </location>
</feature>
<feature type="binding site" evidence="1">
    <location>
        <position position="80"/>
    </location>
    <ligand>
        <name>5-phospho-alpha-D-ribose 1-diphosphate</name>
        <dbReference type="ChEBI" id="CHEBI:58017"/>
    </ligand>
</feature>
<feature type="binding site" evidence="1">
    <location>
        <position position="80"/>
    </location>
    <ligand>
        <name>anthranilate</name>
        <dbReference type="ChEBI" id="CHEBI:16567"/>
        <label>1</label>
    </ligand>
</feature>
<feature type="binding site" evidence="1">
    <location>
        <begin position="83"/>
        <end position="84"/>
    </location>
    <ligand>
        <name>5-phospho-alpha-D-ribose 1-diphosphate</name>
        <dbReference type="ChEBI" id="CHEBI:58017"/>
    </ligand>
</feature>
<feature type="binding site" evidence="1">
    <location>
        <position position="88"/>
    </location>
    <ligand>
        <name>5-phospho-alpha-D-ribose 1-diphosphate</name>
        <dbReference type="ChEBI" id="CHEBI:58017"/>
    </ligand>
</feature>
<feature type="binding site" evidence="1">
    <location>
        <begin position="90"/>
        <end position="93"/>
    </location>
    <ligand>
        <name>5-phospho-alpha-D-ribose 1-diphosphate</name>
        <dbReference type="ChEBI" id="CHEBI:58017"/>
    </ligand>
</feature>
<feature type="binding site" evidence="1">
    <location>
        <position position="92"/>
    </location>
    <ligand>
        <name>Mg(2+)</name>
        <dbReference type="ChEBI" id="CHEBI:18420"/>
        <label>1</label>
    </ligand>
</feature>
<feature type="binding site" evidence="1">
    <location>
        <begin position="108"/>
        <end position="116"/>
    </location>
    <ligand>
        <name>5-phospho-alpha-D-ribose 1-diphosphate</name>
        <dbReference type="ChEBI" id="CHEBI:58017"/>
    </ligand>
</feature>
<feature type="binding site" evidence="1">
    <location>
        <position position="111"/>
    </location>
    <ligand>
        <name>anthranilate</name>
        <dbReference type="ChEBI" id="CHEBI:16567"/>
        <label>1</label>
    </ligand>
</feature>
<feature type="binding site" evidence="1">
    <location>
        <position position="120"/>
    </location>
    <ligand>
        <name>5-phospho-alpha-D-ribose 1-diphosphate</name>
        <dbReference type="ChEBI" id="CHEBI:58017"/>
    </ligand>
</feature>
<feature type="binding site" evidence="1">
    <location>
        <position position="166"/>
    </location>
    <ligand>
        <name>anthranilate</name>
        <dbReference type="ChEBI" id="CHEBI:16567"/>
        <label>2</label>
    </ligand>
</feature>
<feature type="binding site" evidence="1">
    <location>
        <position position="224"/>
    </location>
    <ligand>
        <name>Mg(2+)</name>
        <dbReference type="ChEBI" id="CHEBI:18420"/>
        <label>2</label>
    </ligand>
</feature>
<feature type="binding site" evidence="1">
    <location>
        <position position="225"/>
    </location>
    <ligand>
        <name>Mg(2+)</name>
        <dbReference type="ChEBI" id="CHEBI:18420"/>
        <label>1</label>
    </ligand>
</feature>
<feature type="binding site" evidence="1">
    <location>
        <position position="225"/>
    </location>
    <ligand>
        <name>Mg(2+)</name>
        <dbReference type="ChEBI" id="CHEBI:18420"/>
        <label>2</label>
    </ligand>
</feature>
<gene>
    <name evidence="1" type="primary">trpD</name>
    <name type="ordered locus">Pcal_1208</name>
</gene>